<feature type="chain" id="PRO_1000000928" description="Adenylosuccinate synthetase">
    <location>
        <begin position="1"/>
        <end position="430"/>
    </location>
</feature>
<feature type="active site" description="Proton acceptor" evidence="1">
    <location>
        <position position="13"/>
    </location>
</feature>
<feature type="active site" description="Proton donor" evidence="1">
    <location>
        <position position="41"/>
    </location>
</feature>
<feature type="binding site" evidence="1">
    <location>
        <begin position="12"/>
        <end position="18"/>
    </location>
    <ligand>
        <name>GTP</name>
        <dbReference type="ChEBI" id="CHEBI:37565"/>
    </ligand>
</feature>
<feature type="binding site" description="in other chain" evidence="1">
    <location>
        <begin position="13"/>
        <end position="16"/>
    </location>
    <ligand>
        <name>IMP</name>
        <dbReference type="ChEBI" id="CHEBI:58053"/>
        <note>ligand shared between dimeric partners</note>
    </ligand>
</feature>
<feature type="binding site" evidence="1">
    <location>
        <position position="13"/>
    </location>
    <ligand>
        <name>Mg(2+)</name>
        <dbReference type="ChEBI" id="CHEBI:18420"/>
    </ligand>
</feature>
<feature type="binding site" description="in other chain" evidence="1">
    <location>
        <begin position="38"/>
        <end position="41"/>
    </location>
    <ligand>
        <name>IMP</name>
        <dbReference type="ChEBI" id="CHEBI:58053"/>
        <note>ligand shared between dimeric partners</note>
    </ligand>
</feature>
<feature type="binding site" evidence="1">
    <location>
        <begin position="40"/>
        <end position="42"/>
    </location>
    <ligand>
        <name>GTP</name>
        <dbReference type="ChEBI" id="CHEBI:37565"/>
    </ligand>
</feature>
<feature type="binding site" evidence="1">
    <location>
        <position position="40"/>
    </location>
    <ligand>
        <name>Mg(2+)</name>
        <dbReference type="ChEBI" id="CHEBI:18420"/>
    </ligand>
</feature>
<feature type="binding site" description="in other chain" evidence="1">
    <location>
        <position position="128"/>
    </location>
    <ligand>
        <name>IMP</name>
        <dbReference type="ChEBI" id="CHEBI:58053"/>
        <note>ligand shared between dimeric partners</note>
    </ligand>
</feature>
<feature type="binding site" evidence="1">
    <location>
        <position position="142"/>
    </location>
    <ligand>
        <name>IMP</name>
        <dbReference type="ChEBI" id="CHEBI:58053"/>
        <note>ligand shared between dimeric partners</note>
    </ligand>
</feature>
<feature type="binding site" description="in other chain" evidence="1">
    <location>
        <position position="223"/>
    </location>
    <ligand>
        <name>IMP</name>
        <dbReference type="ChEBI" id="CHEBI:58053"/>
        <note>ligand shared between dimeric partners</note>
    </ligand>
</feature>
<feature type="binding site" description="in other chain" evidence="1">
    <location>
        <position position="238"/>
    </location>
    <ligand>
        <name>IMP</name>
        <dbReference type="ChEBI" id="CHEBI:58053"/>
        <note>ligand shared between dimeric partners</note>
    </ligand>
</feature>
<feature type="binding site" evidence="1">
    <location>
        <begin position="298"/>
        <end position="304"/>
    </location>
    <ligand>
        <name>substrate</name>
    </ligand>
</feature>
<feature type="binding site" description="in other chain" evidence="1">
    <location>
        <position position="302"/>
    </location>
    <ligand>
        <name>IMP</name>
        <dbReference type="ChEBI" id="CHEBI:58053"/>
        <note>ligand shared between dimeric partners</note>
    </ligand>
</feature>
<feature type="binding site" evidence="1">
    <location>
        <position position="304"/>
    </location>
    <ligand>
        <name>GTP</name>
        <dbReference type="ChEBI" id="CHEBI:37565"/>
    </ligand>
</feature>
<feature type="binding site" evidence="1">
    <location>
        <begin position="330"/>
        <end position="332"/>
    </location>
    <ligand>
        <name>GTP</name>
        <dbReference type="ChEBI" id="CHEBI:37565"/>
    </ligand>
</feature>
<feature type="binding site" evidence="1">
    <location>
        <begin position="412"/>
        <end position="414"/>
    </location>
    <ligand>
        <name>GTP</name>
        <dbReference type="ChEBI" id="CHEBI:37565"/>
    </ligand>
</feature>
<comment type="function">
    <text evidence="1">Plays an important role in the de novo pathway of purine nucleotide biosynthesis. Catalyzes the first committed step in the biosynthesis of AMP from IMP.</text>
</comment>
<comment type="catalytic activity">
    <reaction evidence="1">
        <text>IMP + L-aspartate + GTP = N(6)-(1,2-dicarboxyethyl)-AMP + GDP + phosphate + 2 H(+)</text>
        <dbReference type="Rhea" id="RHEA:15753"/>
        <dbReference type="ChEBI" id="CHEBI:15378"/>
        <dbReference type="ChEBI" id="CHEBI:29991"/>
        <dbReference type="ChEBI" id="CHEBI:37565"/>
        <dbReference type="ChEBI" id="CHEBI:43474"/>
        <dbReference type="ChEBI" id="CHEBI:57567"/>
        <dbReference type="ChEBI" id="CHEBI:58053"/>
        <dbReference type="ChEBI" id="CHEBI:58189"/>
        <dbReference type="EC" id="6.3.4.4"/>
    </reaction>
</comment>
<comment type="cofactor">
    <cofactor evidence="1">
        <name>Mg(2+)</name>
        <dbReference type="ChEBI" id="CHEBI:18420"/>
    </cofactor>
    <text evidence="1">Binds 1 Mg(2+) ion per subunit.</text>
</comment>
<comment type="pathway">
    <text evidence="1">Purine metabolism; AMP biosynthesis via de novo pathway; AMP from IMP: step 1/2.</text>
</comment>
<comment type="subunit">
    <text evidence="1">Homodimer.</text>
</comment>
<comment type="subcellular location">
    <subcellularLocation>
        <location evidence="1">Cytoplasm</location>
    </subcellularLocation>
</comment>
<comment type="similarity">
    <text evidence="1">Belongs to the adenylosuccinate synthetase family.</text>
</comment>
<accession>Q1JIX0</accession>
<reference key="1">
    <citation type="journal article" date="2006" name="Proc. Natl. Acad. Sci. U.S.A.">
        <title>Molecular genetic anatomy of inter- and intraserotype variation in the human bacterial pathogen group A Streptococcus.</title>
        <authorList>
            <person name="Beres S.B."/>
            <person name="Richter E.W."/>
            <person name="Nagiec M.J."/>
            <person name="Sumby P."/>
            <person name="Porcella S.F."/>
            <person name="DeLeo F.R."/>
            <person name="Musser J.M."/>
        </authorList>
    </citation>
    <scope>NUCLEOTIDE SEQUENCE [LARGE SCALE GENOMIC DNA]</scope>
    <source>
        <strain>MGAS10270</strain>
    </source>
</reference>
<organism>
    <name type="scientific">Streptococcus pyogenes serotype M2 (strain MGAS10270)</name>
    <dbReference type="NCBI Taxonomy" id="370552"/>
    <lineage>
        <taxon>Bacteria</taxon>
        <taxon>Bacillati</taxon>
        <taxon>Bacillota</taxon>
        <taxon>Bacilli</taxon>
        <taxon>Lactobacillales</taxon>
        <taxon>Streptococcaceae</taxon>
        <taxon>Streptococcus</taxon>
    </lineage>
</organism>
<evidence type="ECO:0000255" key="1">
    <source>
        <dbReference type="HAMAP-Rule" id="MF_00011"/>
    </source>
</evidence>
<proteinExistence type="inferred from homology"/>
<protein>
    <recommendedName>
        <fullName evidence="1">Adenylosuccinate synthetase</fullName>
        <shortName evidence="1">AMPSase</shortName>
        <shortName evidence="1">AdSS</shortName>
        <ecNumber evidence="1">6.3.4.4</ecNumber>
    </recommendedName>
    <alternativeName>
        <fullName evidence="1">IMP--aspartate ligase</fullName>
    </alternativeName>
</protein>
<name>PURA_STRPD</name>
<sequence length="430" mass="47408">MTSVVVVGTQWGDEGKGKITDFLSADAEVIARYQGGDNAGHTIVIDGKKFKLHLIPSGIFFPQKISVIGNGVVVNPKSLVKELAYLHDEGVTTDNLRISDRAHVILPYHIQLDQLQEDAKGDNKIGTTIKGIGPAYMDKAARVGIRIADLLDKDIFAERLRINLAEKNRLFEKMYDSTPLDFDAIFEEYYAYGQEIKQYVTDTSVILNDALDAGKRVLFEGAQGVMLDIDQGTYPFVTSSNPVAGGVTIGSGVGPSKINKVVGVCKAYTSRVGDGPFPTELFDEVGERIREVGHEYGTTTGRPRRVGWFDSVVMRHSRRVSGITNLSLNSIDVLSGLDTVKICVAYDLDGKRIDYYPASLEQLKRCKPIYEELPGWQEDITGVRSLDELPENARNYVRRVGELVGVRISTFSVGPGREQTNILESVWASI</sequence>
<gene>
    <name evidence="1" type="primary">purA</name>
    <name type="ordered locus">MGAS10270_Spy0138</name>
</gene>
<dbReference type="EC" id="6.3.4.4" evidence="1"/>
<dbReference type="EMBL" id="CP000260">
    <property type="protein sequence ID" value="ABF33203.1"/>
    <property type="molecule type" value="Genomic_DNA"/>
</dbReference>
<dbReference type="SMR" id="Q1JIX0"/>
<dbReference type="KEGG" id="sph:MGAS10270_Spy0138"/>
<dbReference type="HOGENOM" id="CLU_029848_0_0_9"/>
<dbReference type="UniPathway" id="UPA00075">
    <property type="reaction ID" value="UER00335"/>
</dbReference>
<dbReference type="Proteomes" id="UP000002436">
    <property type="component" value="Chromosome"/>
</dbReference>
<dbReference type="GO" id="GO:0005737">
    <property type="term" value="C:cytoplasm"/>
    <property type="evidence" value="ECO:0007669"/>
    <property type="project" value="UniProtKB-SubCell"/>
</dbReference>
<dbReference type="GO" id="GO:0004019">
    <property type="term" value="F:adenylosuccinate synthase activity"/>
    <property type="evidence" value="ECO:0007669"/>
    <property type="project" value="UniProtKB-UniRule"/>
</dbReference>
<dbReference type="GO" id="GO:0005525">
    <property type="term" value="F:GTP binding"/>
    <property type="evidence" value="ECO:0007669"/>
    <property type="project" value="UniProtKB-UniRule"/>
</dbReference>
<dbReference type="GO" id="GO:0000287">
    <property type="term" value="F:magnesium ion binding"/>
    <property type="evidence" value="ECO:0007669"/>
    <property type="project" value="UniProtKB-UniRule"/>
</dbReference>
<dbReference type="GO" id="GO:0044208">
    <property type="term" value="P:'de novo' AMP biosynthetic process"/>
    <property type="evidence" value="ECO:0007669"/>
    <property type="project" value="UniProtKB-UniRule"/>
</dbReference>
<dbReference type="GO" id="GO:0046040">
    <property type="term" value="P:IMP metabolic process"/>
    <property type="evidence" value="ECO:0007669"/>
    <property type="project" value="TreeGrafter"/>
</dbReference>
<dbReference type="CDD" id="cd03108">
    <property type="entry name" value="AdSS"/>
    <property type="match status" value="1"/>
</dbReference>
<dbReference type="FunFam" id="1.10.300.10:FF:000001">
    <property type="entry name" value="Adenylosuccinate synthetase"/>
    <property type="match status" value="1"/>
</dbReference>
<dbReference type="FunFam" id="3.90.170.10:FF:000001">
    <property type="entry name" value="Adenylosuccinate synthetase"/>
    <property type="match status" value="1"/>
</dbReference>
<dbReference type="Gene3D" id="3.40.440.10">
    <property type="entry name" value="Adenylosuccinate Synthetase, subunit A, domain 1"/>
    <property type="match status" value="1"/>
</dbReference>
<dbReference type="Gene3D" id="1.10.300.10">
    <property type="entry name" value="Adenylosuccinate Synthetase, subunit A, domain 2"/>
    <property type="match status" value="1"/>
</dbReference>
<dbReference type="Gene3D" id="3.90.170.10">
    <property type="entry name" value="Adenylosuccinate Synthetase, subunit A, domain 3"/>
    <property type="match status" value="1"/>
</dbReference>
<dbReference type="HAMAP" id="MF_00011">
    <property type="entry name" value="Adenylosucc_synth"/>
    <property type="match status" value="1"/>
</dbReference>
<dbReference type="InterPro" id="IPR018220">
    <property type="entry name" value="Adenylosuccin_syn_GTP-bd"/>
</dbReference>
<dbReference type="InterPro" id="IPR033128">
    <property type="entry name" value="Adenylosuccin_syn_Lys_AS"/>
</dbReference>
<dbReference type="InterPro" id="IPR042109">
    <property type="entry name" value="Adenylosuccinate_synth_dom1"/>
</dbReference>
<dbReference type="InterPro" id="IPR042110">
    <property type="entry name" value="Adenylosuccinate_synth_dom2"/>
</dbReference>
<dbReference type="InterPro" id="IPR042111">
    <property type="entry name" value="Adenylosuccinate_synth_dom3"/>
</dbReference>
<dbReference type="InterPro" id="IPR001114">
    <property type="entry name" value="Adenylosuccinate_synthetase"/>
</dbReference>
<dbReference type="InterPro" id="IPR027417">
    <property type="entry name" value="P-loop_NTPase"/>
</dbReference>
<dbReference type="NCBIfam" id="NF002223">
    <property type="entry name" value="PRK01117.1"/>
    <property type="match status" value="1"/>
</dbReference>
<dbReference type="NCBIfam" id="TIGR00184">
    <property type="entry name" value="purA"/>
    <property type="match status" value="1"/>
</dbReference>
<dbReference type="PANTHER" id="PTHR11846">
    <property type="entry name" value="ADENYLOSUCCINATE SYNTHETASE"/>
    <property type="match status" value="1"/>
</dbReference>
<dbReference type="PANTHER" id="PTHR11846:SF0">
    <property type="entry name" value="ADENYLOSUCCINATE SYNTHETASE"/>
    <property type="match status" value="1"/>
</dbReference>
<dbReference type="Pfam" id="PF00709">
    <property type="entry name" value="Adenylsucc_synt"/>
    <property type="match status" value="1"/>
</dbReference>
<dbReference type="SMART" id="SM00788">
    <property type="entry name" value="Adenylsucc_synt"/>
    <property type="match status" value="1"/>
</dbReference>
<dbReference type="SUPFAM" id="SSF52540">
    <property type="entry name" value="P-loop containing nucleoside triphosphate hydrolases"/>
    <property type="match status" value="1"/>
</dbReference>
<dbReference type="PROSITE" id="PS01266">
    <property type="entry name" value="ADENYLOSUCCIN_SYN_1"/>
    <property type="match status" value="1"/>
</dbReference>
<dbReference type="PROSITE" id="PS00513">
    <property type="entry name" value="ADENYLOSUCCIN_SYN_2"/>
    <property type="match status" value="1"/>
</dbReference>
<keyword id="KW-0963">Cytoplasm</keyword>
<keyword id="KW-0342">GTP-binding</keyword>
<keyword id="KW-0436">Ligase</keyword>
<keyword id="KW-0460">Magnesium</keyword>
<keyword id="KW-0479">Metal-binding</keyword>
<keyword id="KW-0547">Nucleotide-binding</keyword>
<keyword id="KW-0658">Purine biosynthesis</keyword>